<sequence>MQEQYNPQDLEQKIQKHWDDNKTFVVTEDANKEKFYCLSMFPYPSGRLHMGHVRNYTIGDVVSRYQRLQGKNVMQPIGWDAFGLPAENAAVKNKTAPAPWTYENIEYMKNQLKLLGFGYDWNREFATCTPEYYRWEQEFFTKLYSKGLVYKKTSSVNWCPNDQTVLANEQVEDGCCWRCDTPVEQKKIPQWFIKITEYAQELLDDLDNLDGWPEMVKTMQRNWIGRSEGVELSFAVNGEESPLEVYTTRPDTLMGVTYVGIAAGHPLAEKASQNNPELAAFVEECRNTKVAEAELATMEKKGMDTGLRAIHPLNGREVPVFVANFVLMDYGTGAVMAVPAHDQRDFEFATKYGLDIIPVIKPEDGSDLDVSEAAYTEKGVLFDSGEFDGLAFQEAFDAIAAKLEAEGKGKKTVNFRLRDWGVSRQRYWGAPIPMVTTEDGEVHPVPADQLPVILPEDVVMDGVTSPIKADKEWAKTTFNGEPALRETDTFDTFMESSWYYARYCSPQADDILDPEKANYWLPVDQYIGGIEHACMHLLYSRFFHKLLRDAGYVTSDEPFKQLLCQGMVLADAFYYTNDKGGKEWVAPTDVTIERDAKGRIEKAVDDQGREVEHSGMIKMSKSKNNGIDPQEMVDKYGADTVRLFMMFASPADMTLEWQESGVEGANRFLKRVWKLVHEHTNKGTTEALDTSSLTGDQKALRRDVHKTIAKVSDDIGRRQTFNTAIAAIMELMNKLNKAPQESAQDRALLDEALKAVVAMLYPMTPHASFAMWEALGESDLDSATWPTFDENALVEDEKTIVVMINGKLRAKLVVAADATEEHVRELGLKDENAMKFLDGLTIRKVIYVPGKLLNIVAN</sequence>
<comment type="catalytic activity">
    <reaction evidence="1">
        <text>tRNA(Leu) + L-leucine + ATP = L-leucyl-tRNA(Leu) + AMP + diphosphate</text>
        <dbReference type="Rhea" id="RHEA:11688"/>
        <dbReference type="Rhea" id="RHEA-COMP:9613"/>
        <dbReference type="Rhea" id="RHEA-COMP:9622"/>
        <dbReference type="ChEBI" id="CHEBI:30616"/>
        <dbReference type="ChEBI" id="CHEBI:33019"/>
        <dbReference type="ChEBI" id="CHEBI:57427"/>
        <dbReference type="ChEBI" id="CHEBI:78442"/>
        <dbReference type="ChEBI" id="CHEBI:78494"/>
        <dbReference type="ChEBI" id="CHEBI:456215"/>
        <dbReference type="EC" id="6.1.1.4"/>
    </reaction>
</comment>
<comment type="subcellular location">
    <subcellularLocation>
        <location evidence="1">Cytoplasm</location>
    </subcellularLocation>
</comment>
<comment type="similarity">
    <text evidence="1">Belongs to the class-I aminoacyl-tRNA synthetase family.</text>
</comment>
<gene>
    <name evidence="1" type="primary">leuS</name>
    <name type="ordered locus">VFMJ11_0772</name>
</gene>
<accession>B5FBK7</accession>
<keyword id="KW-0030">Aminoacyl-tRNA synthetase</keyword>
<keyword id="KW-0067">ATP-binding</keyword>
<keyword id="KW-0963">Cytoplasm</keyword>
<keyword id="KW-0436">Ligase</keyword>
<keyword id="KW-0547">Nucleotide-binding</keyword>
<keyword id="KW-0648">Protein biosynthesis</keyword>
<dbReference type="EC" id="6.1.1.4" evidence="1"/>
<dbReference type="EMBL" id="CP001139">
    <property type="protein sequence ID" value="ACH65672.1"/>
    <property type="molecule type" value="Genomic_DNA"/>
</dbReference>
<dbReference type="RefSeq" id="WP_012533208.1">
    <property type="nucleotide sequence ID" value="NC_011184.1"/>
</dbReference>
<dbReference type="SMR" id="B5FBK7"/>
<dbReference type="KEGG" id="vfm:VFMJ11_0772"/>
<dbReference type="HOGENOM" id="CLU_004427_0_0_6"/>
<dbReference type="Proteomes" id="UP000001857">
    <property type="component" value="Chromosome I"/>
</dbReference>
<dbReference type="GO" id="GO:0005829">
    <property type="term" value="C:cytosol"/>
    <property type="evidence" value="ECO:0007669"/>
    <property type="project" value="TreeGrafter"/>
</dbReference>
<dbReference type="GO" id="GO:0002161">
    <property type="term" value="F:aminoacyl-tRNA deacylase activity"/>
    <property type="evidence" value="ECO:0007669"/>
    <property type="project" value="InterPro"/>
</dbReference>
<dbReference type="GO" id="GO:0005524">
    <property type="term" value="F:ATP binding"/>
    <property type="evidence" value="ECO:0007669"/>
    <property type="project" value="UniProtKB-UniRule"/>
</dbReference>
<dbReference type="GO" id="GO:0004823">
    <property type="term" value="F:leucine-tRNA ligase activity"/>
    <property type="evidence" value="ECO:0007669"/>
    <property type="project" value="UniProtKB-UniRule"/>
</dbReference>
<dbReference type="GO" id="GO:0006429">
    <property type="term" value="P:leucyl-tRNA aminoacylation"/>
    <property type="evidence" value="ECO:0007669"/>
    <property type="project" value="UniProtKB-UniRule"/>
</dbReference>
<dbReference type="CDD" id="cd07958">
    <property type="entry name" value="Anticodon_Ia_Leu_BEm"/>
    <property type="match status" value="1"/>
</dbReference>
<dbReference type="CDD" id="cd00812">
    <property type="entry name" value="LeuRS_core"/>
    <property type="match status" value="1"/>
</dbReference>
<dbReference type="FunFam" id="1.10.730.10:FF:000002">
    <property type="entry name" value="Leucine--tRNA ligase"/>
    <property type="match status" value="1"/>
</dbReference>
<dbReference type="FunFam" id="2.20.28.290:FF:000001">
    <property type="entry name" value="Leucine--tRNA ligase"/>
    <property type="match status" value="1"/>
</dbReference>
<dbReference type="FunFam" id="3.10.20.590:FF:000001">
    <property type="entry name" value="Leucine--tRNA ligase"/>
    <property type="match status" value="1"/>
</dbReference>
<dbReference type="FunFam" id="3.40.50.620:FF:000003">
    <property type="entry name" value="Leucine--tRNA ligase"/>
    <property type="match status" value="1"/>
</dbReference>
<dbReference type="FunFam" id="3.40.50.620:FF:000051">
    <property type="entry name" value="Leucine--tRNA ligase"/>
    <property type="match status" value="1"/>
</dbReference>
<dbReference type="FunFam" id="3.90.740.10:FF:000012">
    <property type="entry name" value="Leucine--tRNA ligase"/>
    <property type="match status" value="1"/>
</dbReference>
<dbReference type="Gene3D" id="2.20.28.290">
    <property type="match status" value="1"/>
</dbReference>
<dbReference type="Gene3D" id="3.10.20.590">
    <property type="match status" value="1"/>
</dbReference>
<dbReference type="Gene3D" id="3.40.50.620">
    <property type="entry name" value="HUPs"/>
    <property type="match status" value="1"/>
</dbReference>
<dbReference type="Gene3D" id="1.10.730.10">
    <property type="entry name" value="Isoleucyl-tRNA Synthetase, Domain 1"/>
    <property type="match status" value="1"/>
</dbReference>
<dbReference type="Gene3D" id="3.90.740.10">
    <property type="entry name" value="Valyl/Leucyl/Isoleucyl-tRNA synthetase, editing domain"/>
    <property type="match status" value="1"/>
</dbReference>
<dbReference type="HAMAP" id="MF_00049_B">
    <property type="entry name" value="Leu_tRNA_synth_B"/>
    <property type="match status" value="1"/>
</dbReference>
<dbReference type="InterPro" id="IPR001412">
    <property type="entry name" value="aa-tRNA-synth_I_CS"/>
</dbReference>
<dbReference type="InterPro" id="IPR002300">
    <property type="entry name" value="aa-tRNA-synth_Ia"/>
</dbReference>
<dbReference type="InterPro" id="IPR002302">
    <property type="entry name" value="Leu-tRNA-ligase"/>
</dbReference>
<dbReference type="InterPro" id="IPR025709">
    <property type="entry name" value="Leu_tRNA-synth_edit"/>
</dbReference>
<dbReference type="InterPro" id="IPR013155">
    <property type="entry name" value="M/V/L/I-tRNA-synth_anticd-bd"/>
</dbReference>
<dbReference type="InterPro" id="IPR015413">
    <property type="entry name" value="Methionyl/Leucyl_tRNA_Synth"/>
</dbReference>
<dbReference type="InterPro" id="IPR014729">
    <property type="entry name" value="Rossmann-like_a/b/a_fold"/>
</dbReference>
<dbReference type="InterPro" id="IPR009080">
    <property type="entry name" value="tRNAsynth_Ia_anticodon-bd"/>
</dbReference>
<dbReference type="InterPro" id="IPR009008">
    <property type="entry name" value="Val/Leu/Ile-tRNA-synth_edit"/>
</dbReference>
<dbReference type="NCBIfam" id="TIGR00396">
    <property type="entry name" value="leuS_bact"/>
    <property type="match status" value="1"/>
</dbReference>
<dbReference type="PANTHER" id="PTHR43740:SF2">
    <property type="entry name" value="LEUCINE--TRNA LIGASE, MITOCHONDRIAL"/>
    <property type="match status" value="1"/>
</dbReference>
<dbReference type="PANTHER" id="PTHR43740">
    <property type="entry name" value="LEUCYL-TRNA SYNTHETASE"/>
    <property type="match status" value="1"/>
</dbReference>
<dbReference type="Pfam" id="PF08264">
    <property type="entry name" value="Anticodon_1"/>
    <property type="match status" value="1"/>
</dbReference>
<dbReference type="Pfam" id="PF00133">
    <property type="entry name" value="tRNA-synt_1"/>
    <property type="match status" value="2"/>
</dbReference>
<dbReference type="Pfam" id="PF13603">
    <property type="entry name" value="tRNA-synt_1_2"/>
    <property type="match status" value="1"/>
</dbReference>
<dbReference type="Pfam" id="PF09334">
    <property type="entry name" value="tRNA-synt_1g"/>
    <property type="match status" value="1"/>
</dbReference>
<dbReference type="PRINTS" id="PR00985">
    <property type="entry name" value="TRNASYNTHLEU"/>
</dbReference>
<dbReference type="SUPFAM" id="SSF47323">
    <property type="entry name" value="Anticodon-binding domain of a subclass of class I aminoacyl-tRNA synthetases"/>
    <property type="match status" value="1"/>
</dbReference>
<dbReference type="SUPFAM" id="SSF52374">
    <property type="entry name" value="Nucleotidylyl transferase"/>
    <property type="match status" value="1"/>
</dbReference>
<dbReference type="SUPFAM" id="SSF50677">
    <property type="entry name" value="ValRS/IleRS/LeuRS editing domain"/>
    <property type="match status" value="1"/>
</dbReference>
<dbReference type="PROSITE" id="PS00178">
    <property type="entry name" value="AA_TRNA_LIGASE_I"/>
    <property type="match status" value="1"/>
</dbReference>
<reference key="1">
    <citation type="submission" date="2008-08" db="EMBL/GenBank/DDBJ databases">
        <title>Complete sequence of Vibrio fischeri strain MJ11.</title>
        <authorList>
            <person name="Mandel M.J."/>
            <person name="Stabb E.V."/>
            <person name="Ruby E.G."/>
            <person name="Ferriera S."/>
            <person name="Johnson J."/>
            <person name="Kravitz S."/>
            <person name="Beeson K."/>
            <person name="Sutton G."/>
            <person name="Rogers Y.-H."/>
            <person name="Friedman R."/>
            <person name="Frazier M."/>
            <person name="Venter J.C."/>
        </authorList>
    </citation>
    <scope>NUCLEOTIDE SEQUENCE [LARGE SCALE GENOMIC DNA]</scope>
    <source>
        <strain>MJ11</strain>
    </source>
</reference>
<evidence type="ECO:0000255" key="1">
    <source>
        <dbReference type="HAMAP-Rule" id="MF_00049"/>
    </source>
</evidence>
<proteinExistence type="inferred from homology"/>
<protein>
    <recommendedName>
        <fullName evidence="1">Leucine--tRNA ligase</fullName>
        <ecNumber evidence="1">6.1.1.4</ecNumber>
    </recommendedName>
    <alternativeName>
        <fullName evidence="1">Leucyl-tRNA synthetase</fullName>
        <shortName evidence="1">LeuRS</shortName>
    </alternativeName>
</protein>
<organism>
    <name type="scientific">Aliivibrio fischeri (strain MJ11)</name>
    <name type="common">Vibrio fischeri</name>
    <dbReference type="NCBI Taxonomy" id="388396"/>
    <lineage>
        <taxon>Bacteria</taxon>
        <taxon>Pseudomonadati</taxon>
        <taxon>Pseudomonadota</taxon>
        <taxon>Gammaproteobacteria</taxon>
        <taxon>Vibrionales</taxon>
        <taxon>Vibrionaceae</taxon>
        <taxon>Aliivibrio</taxon>
    </lineage>
</organism>
<name>SYL_ALIFM</name>
<feature type="chain" id="PRO_1000091377" description="Leucine--tRNA ligase">
    <location>
        <begin position="1"/>
        <end position="858"/>
    </location>
</feature>
<feature type="short sequence motif" description="'HIGH' region">
    <location>
        <begin position="42"/>
        <end position="52"/>
    </location>
</feature>
<feature type="short sequence motif" description="'KMSKS' region">
    <location>
        <begin position="618"/>
        <end position="622"/>
    </location>
</feature>
<feature type="binding site" evidence="1">
    <location>
        <position position="621"/>
    </location>
    <ligand>
        <name>ATP</name>
        <dbReference type="ChEBI" id="CHEBI:30616"/>
    </ligand>
</feature>